<dbReference type="EMBL" id="AABR03063785">
    <property type="status" value="NOT_ANNOTATED_CDS"/>
    <property type="molecule type" value="Genomic_DNA"/>
</dbReference>
<dbReference type="EMBL" id="AABR03064061">
    <property type="status" value="NOT_ANNOTATED_CDS"/>
    <property type="molecule type" value="Genomic_DNA"/>
</dbReference>
<dbReference type="EMBL" id="AF192757">
    <property type="protein sequence ID" value="AAF07179.1"/>
    <property type="molecule type" value="mRNA"/>
</dbReference>
<dbReference type="RefSeq" id="XP_006244059.1">
    <property type="nucleotide sequence ID" value="XM_006243997.4"/>
</dbReference>
<dbReference type="SMR" id="Q9QZA2"/>
<dbReference type="BioGRID" id="272390">
    <property type="interactions" value="1"/>
</dbReference>
<dbReference type="FunCoup" id="Q9QZA2">
    <property type="interactions" value="4128"/>
</dbReference>
<dbReference type="STRING" id="10116.ENSRNOP00000012114"/>
<dbReference type="GlyGen" id="Q9QZA2">
    <property type="glycosylation" value="2 sites"/>
</dbReference>
<dbReference type="iPTMnet" id="Q9QZA2"/>
<dbReference type="PhosphoSitePlus" id="Q9QZA2"/>
<dbReference type="jPOST" id="Q9QZA2"/>
<dbReference type="PaxDb" id="10116-ENSRNOP00000012114"/>
<dbReference type="Ensembl" id="ENSRNOT00000012114.8">
    <property type="protein sequence ID" value="ENSRNOP00000012114.8"/>
    <property type="gene ID" value="ENSRNOG00000008981.8"/>
</dbReference>
<dbReference type="GeneID" id="501083"/>
<dbReference type="UCSC" id="RGD:68357">
    <property type="organism name" value="rat"/>
</dbReference>
<dbReference type="AGR" id="RGD:68357"/>
<dbReference type="CTD" id="10015"/>
<dbReference type="RGD" id="68357">
    <property type="gene designation" value="Pdcd6ip"/>
</dbReference>
<dbReference type="eggNOG" id="KOG2220">
    <property type="taxonomic scope" value="Eukaryota"/>
</dbReference>
<dbReference type="GeneTree" id="ENSGT01100000263856"/>
<dbReference type="HOGENOM" id="CLU_007181_2_0_1"/>
<dbReference type="InParanoid" id="Q9QZA2"/>
<dbReference type="OMA" id="VSHAEEM"/>
<dbReference type="OrthoDB" id="2141925at2759"/>
<dbReference type="PhylomeDB" id="Q9QZA2"/>
<dbReference type="Reactome" id="R-RNO-5213460">
    <property type="pathway name" value="RIPK1-mediated regulated necrosis"/>
</dbReference>
<dbReference type="Reactome" id="R-RNO-5675482">
    <property type="pathway name" value="Regulation of necroptotic cell death"/>
</dbReference>
<dbReference type="PRO" id="PR:Q9QZA2"/>
<dbReference type="Proteomes" id="UP000002494">
    <property type="component" value="Chromosome 8"/>
</dbReference>
<dbReference type="GO" id="GO:0042641">
    <property type="term" value="C:actomyosin"/>
    <property type="evidence" value="ECO:0000250"/>
    <property type="project" value="UniProtKB"/>
</dbReference>
<dbReference type="GO" id="GO:0005923">
    <property type="term" value="C:bicellular tight junction"/>
    <property type="evidence" value="ECO:0007669"/>
    <property type="project" value="UniProtKB-SubCell"/>
</dbReference>
<dbReference type="GO" id="GO:0005813">
    <property type="term" value="C:centrosome"/>
    <property type="evidence" value="ECO:0007669"/>
    <property type="project" value="UniProtKB-SubCell"/>
</dbReference>
<dbReference type="GO" id="GO:0005829">
    <property type="term" value="C:cytosol"/>
    <property type="evidence" value="ECO:0000266"/>
    <property type="project" value="RGD"/>
</dbReference>
<dbReference type="GO" id="GO:0070971">
    <property type="term" value="C:endoplasmic reticulum exit site"/>
    <property type="evidence" value="ECO:0000266"/>
    <property type="project" value="RGD"/>
</dbReference>
<dbReference type="GO" id="GO:0005768">
    <property type="term" value="C:endosome"/>
    <property type="evidence" value="ECO:0000318"/>
    <property type="project" value="GO_Central"/>
</dbReference>
<dbReference type="GO" id="GO:0070062">
    <property type="term" value="C:extracellular exosome"/>
    <property type="evidence" value="ECO:0000250"/>
    <property type="project" value="UniProtKB"/>
</dbReference>
<dbReference type="GO" id="GO:0090543">
    <property type="term" value="C:Flemming body"/>
    <property type="evidence" value="ECO:0000250"/>
    <property type="project" value="UniProtKB"/>
</dbReference>
<dbReference type="GO" id="GO:0001772">
    <property type="term" value="C:immunological synapse"/>
    <property type="evidence" value="ECO:0000266"/>
    <property type="project" value="RGD"/>
</dbReference>
<dbReference type="GO" id="GO:0042470">
    <property type="term" value="C:melanosome"/>
    <property type="evidence" value="ECO:0007669"/>
    <property type="project" value="UniProtKB-SubCell"/>
</dbReference>
<dbReference type="GO" id="GO:0043025">
    <property type="term" value="C:neuronal cell body"/>
    <property type="evidence" value="ECO:0000314"/>
    <property type="project" value="RGD"/>
</dbReference>
<dbReference type="GO" id="GO:0048471">
    <property type="term" value="C:perinuclear region of cytoplasm"/>
    <property type="evidence" value="ECO:0000314"/>
    <property type="project" value="RGD"/>
</dbReference>
<dbReference type="GO" id="GO:0048306">
    <property type="term" value="F:calcium-dependent protein binding"/>
    <property type="evidence" value="ECO:0000266"/>
    <property type="project" value="RGD"/>
</dbReference>
<dbReference type="GO" id="GO:0046983">
    <property type="term" value="F:protein dimerization activity"/>
    <property type="evidence" value="ECO:0000266"/>
    <property type="project" value="RGD"/>
</dbReference>
<dbReference type="GO" id="GO:0042803">
    <property type="term" value="F:protein homodimerization activity"/>
    <property type="evidence" value="ECO:0000266"/>
    <property type="project" value="RGD"/>
</dbReference>
<dbReference type="GO" id="GO:0031871">
    <property type="term" value="F:proteinase activated receptor binding"/>
    <property type="evidence" value="ECO:0000266"/>
    <property type="project" value="RGD"/>
</dbReference>
<dbReference type="GO" id="GO:0017124">
    <property type="term" value="F:SH3 domain binding"/>
    <property type="evidence" value="ECO:0000314"/>
    <property type="project" value="RGD"/>
</dbReference>
<dbReference type="GO" id="GO:0000915">
    <property type="term" value="P:actomyosin contractile ring assembly"/>
    <property type="evidence" value="ECO:0000250"/>
    <property type="project" value="UniProtKB"/>
</dbReference>
<dbReference type="GO" id="GO:0006915">
    <property type="term" value="P:apoptotic process"/>
    <property type="evidence" value="ECO:0007669"/>
    <property type="project" value="UniProtKB-KW"/>
</dbReference>
<dbReference type="GO" id="GO:0070830">
    <property type="term" value="P:bicellular tight junction assembly"/>
    <property type="evidence" value="ECO:0000250"/>
    <property type="project" value="UniProtKB"/>
</dbReference>
<dbReference type="GO" id="GO:0097734">
    <property type="term" value="P:extracellular exosome biogenesis"/>
    <property type="evidence" value="ECO:0000250"/>
    <property type="project" value="UniProtKB"/>
</dbReference>
<dbReference type="GO" id="GO:0016236">
    <property type="term" value="P:macroautophagy"/>
    <property type="evidence" value="ECO:0000250"/>
    <property type="project" value="UniProtKB"/>
</dbReference>
<dbReference type="GO" id="GO:0045199">
    <property type="term" value="P:maintenance of epithelial cell apical/basal polarity"/>
    <property type="evidence" value="ECO:0000250"/>
    <property type="project" value="UniProtKB"/>
</dbReference>
<dbReference type="GO" id="GO:0061952">
    <property type="term" value="P:midbody abscission"/>
    <property type="evidence" value="ECO:0000266"/>
    <property type="project" value="RGD"/>
</dbReference>
<dbReference type="GO" id="GO:0000281">
    <property type="term" value="P:mitotic cytokinesis"/>
    <property type="evidence" value="ECO:0000250"/>
    <property type="project" value="UniProtKB"/>
</dbReference>
<dbReference type="GO" id="GO:1903543">
    <property type="term" value="P:positive regulation of exosomal secretion"/>
    <property type="evidence" value="ECO:0000266"/>
    <property type="project" value="RGD"/>
</dbReference>
<dbReference type="GO" id="GO:1903553">
    <property type="term" value="P:positive regulation of extracellular exosome assembly"/>
    <property type="evidence" value="ECO:0000266"/>
    <property type="project" value="RGD"/>
</dbReference>
<dbReference type="GO" id="GO:0051260">
    <property type="term" value="P:protein homooligomerization"/>
    <property type="evidence" value="ECO:0000266"/>
    <property type="project" value="RGD"/>
</dbReference>
<dbReference type="GO" id="GO:0015031">
    <property type="term" value="P:protein transport"/>
    <property type="evidence" value="ECO:0007669"/>
    <property type="project" value="UniProtKB-KW"/>
</dbReference>
<dbReference type="GO" id="GO:0010824">
    <property type="term" value="P:regulation of centrosome duplication"/>
    <property type="evidence" value="ECO:0000266"/>
    <property type="project" value="RGD"/>
</dbReference>
<dbReference type="GO" id="GO:1903551">
    <property type="term" value="P:regulation of extracellular exosome assembly"/>
    <property type="evidence" value="ECO:0000266"/>
    <property type="project" value="RGD"/>
</dbReference>
<dbReference type="GO" id="GO:0090559">
    <property type="term" value="P:regulation of membrane permeability"/>
    <property type="evidence" value="ECO:0000250"/>
    <property type="project" value="UniProtKB"/>
</dbReference>
<dbReference type="GO" id="GO:0090611">
    <property type="term" value="P:ubiquitin-independent protein catabolic process via the multivesicular body sorting pathway"/>
    <property type="evidence" value="ECO:0000266"/>
    <property type="project" value="RGD"/>
</dbReference>
<dbReference type="GO" id="GO:0046755">
    <property type="term" value="P:viral budding"/>
    <property type="evidence" value="ECO:0000266"/>
    <property type="project" value="RGD"/>
</dbReference>
<dbReference type="GO" id="GO:0039702">
    <property type="term" value="P:viral budding via host ESCRT complex"/>
    <property type="evidence" value="ECO:0000266"/>
    <property type="project" value="RGD"/>
</dbReference>
<dbReference type="CDD" id="cd09240">
    <property type="entry name" value="BRO1_Alix"/>
    <property type="match status" value="1"/>
</dbReference>
<dbReference type="CDD" id="cd09235">
    <property type="entry name" value="V_Alix"/>
    <property type="match status" value="1"/>
</dbReference>
<dbReference type="FunFam" id="1.25.40.280:FF:000001">
    <property type="entry name" value="programmed cell death 6-interacting protein-like isoform X1"/>
    <property type="match status" value="1"/>
</dbReference>
<dbReference type="FunFam" id="1.20.140.50:FF:000001">
    <property type="entry name" value="programmed cell death 6-interacting protein-like isoform X2"/>
    <property type="match status" value="1"/>
</dbReference>
<dbReference type="Gene3D" id="1.20.120.560">
    <property type="entry name" value="alix/aip1 in complex with the ypdl late domain"/>
    <property type="match status" value="1"/>
</dbReference>
<dbReference type="Gene3D" id="1.20.140.50">
    <property type="entry name" value="alix/aip1 like domains"/>
    <property type="match status" value="1"/>
</dbReference>
<dbReference type="Gene3D" id="1.25.40.280">
    <property type="entry name" value="alix/aip1 like domains"/>
    <property type="match status" value="1"/>
</dbReference>
<dbReference type="InterPro" id="IPR025304">
    <property type="entry name" value="ALIX_V_dom"/>
</dbReference>
<dbReference type="InterPro" id="IPR004328">
    <property type="entry name" value="BRO1_dom"/>
</dbReference>
<dbReference type="InterPro" id="IPR038499">
    <property type="entry name" value="BRO1_sf"/>
</dbReference>
<dbReference type="PANTHER" id="PTHR23030">
    <property type="entry name" value="PCD6 INTERACTING PROTEIN-RELATED"/>
    <property type="match status" value="1"/>
</dbReference>
<dbReference type="PANTHER" id="PTHR23030:SF39">
    <property type="entry name" value="PROGRAMMED CELL DEATH 6-INTERACTING PROTEIN"/>
    <property type="match status" value="1"/>
</dbReference>
<dbReference type="Pfam" id="PF13949">
    <property type="entry name" value="ALIX_LYPXL_bnd"/>
    <property type="match status" value="1"/>
</dbReference>
<dbReference type="Pfam" id="PF03097">
    <property type="entry name" value="BRO1"/>
    <property type="match status" value="1"/>
</dbReference>
<dbReference type="SMART" id="SM01041">
    <property type="entry name" value="BRO1"/>
    <property type="match status" value="1"/>
</dbReference>
<dbReference type="PROSITE" id="PS51180">
    <property type="entry name" value="BRO1"/>
    <property type="match status" value="1"/>
</dbReference>
<sequence>MASFIWVQLKKTSEVDLAKPLVKFIQQTYPSGGEEQAQYCRAAEELSKLRRSALGRPLDKHEGALETLLRYYDQICSIEPKFPFSENQICLTFTWKDAFDKGSLFGGSVKLALASLGYEKSCVLFNCAALASQIAAEQNLDNDEGLKTAAKQYQFASGAFLHIKDTVLSALSREPTVDISPDTVGTLSLIMLAQAQEVFFLKATRDKMKDAIIAKLANQAADYFGDAFKQCQYKDALPKYFYFQEVFPTLAAKQCIMQANAEYHQSILAKQQKKFGEEIARLQHAAELIKNVASRYDEYVNVKDFSDKINRALAAAKKDNDFIYHDRVPDLKDLDPIGKATLVKPTPVNVPISQKFTDLFEKMVPVSVQQSLAVFSQRKADLVNRSIAQMREATTLANGVLASLNLPAAIEDVSGDTVPQSILTKSTAVVEQGGIQTVDQLIKELPELLQRNREILEESLRLLDEEEATDNDLRAKFKDRWQRTPSNDLYKPLRAEGAKFRAVLDKAVQADGQVKERYQSHRDTIALLCKPEPELNAAIPSANPAKTMQGSEVVNVLKSLLSNLDEIKKEREGLENDLKSVNFDMTSKFLTALAQDGVINEEALSVTELDRIYGGLTTKVQESLKKQEGLLKNIQVSHQEFSKMKQSNSEASLREEVLKNLATAYDNFVELVANLKEGTKFYNELTEILVRFQNKCSDIVFARKTERDELLKDLQQSIAREPSAPSIPPPAYQSSPAGGHATAPTPAPRTMPPAKPQPPARPPPPVLPANRVPPAAAATAPAGVGTASAAPPQTPGSAPPPQAQGPPYPTYPGYPGYCQMPMPMGYNPYTYGQYNMPYPPVYHQSPGQAPYPGPQQPTYPFPQPPQQSYYPQQ</sequence>
<protein>
    <recommendedName>
        <fullName evidence="7">Programmed cell death 6-interacting protein</fullName>
    </recommendedName>
    <alternativeName>
        <fullName>ALG-2-interacting protein 1</fullName>
    </alternativeName>
</protein>
<accession>Q9QZA2</accession>
<proteinExistence type="evidence at protein level"/>
<gene>
    <name evidence="8" type="primary">Pdcd6ip</name>
    <name type="synonym">Aip1</name>
</gene>
<reference key="1">
    <citation type="journal article" date="2004" name="Nature">
        <title>Genome sequence of the Brown Norway rat yields insights into mammalian evolution.</title>
        <authorList>
            <person name="Gibbs R.A."/>
            <person name="Weinstock G.M."/>
            <person name="Metzker M.L."/>
            <person name="Muzny D.M."/>
            <person name="Sodergren E.J."/>
            <person name="Scherer S."/>
            <person name="Scott G."/>
            <person name="Steffen D."/>
            <person name="Worley K.C."/>
            <person name="Burch P.E."/>
            <person name="Okwuonu G."/>
            <person name="Hines S."/>
            <person name="Lewis L."/>
            <person name="Deramo C."/>
            <person name="Delgado O."/>
            <person name="Dugan-Rocha S."/>
            <person name="Miner G."/>
            <person name="Morgan M."/>
            <person name="Hawes A."/>
            <person name="Gill R."/>
            <person name="Holt R.A."/>
            <person name="Adams M.D."/>
            <person name="Amanatides P.G."/>
            <person name="Baden-Tillson H."/>
            <person name="Barnstead M."/>
            <person name="Chin S."/>
            <person name="Evans C.A."/>
            <person name="Ferriera S."/>
            <person name="Fosler C."/>
            <person name="Glodek A."/>
            <person name="Gu Z."/>
            <person name="Jennings D."/>
            <person name="Kraft C.L."/>
            <person name="Nguyen T."/>
            <person name="Pfannkoch C.M."/>
            <person name="Sitter C."/>
            <person name="Sutton G.G."/>
            <person name="Venter J.C."/>
            <person name="Woodage T."/>
            <person name="Smith D."/>
            <person name="Lee H.-M."/>
            <person name="Gustafson E."/>
            <person name="Cahill P."/>
            <person name="Kana A."/>
            <person name="Doucette-Stamm L."/>
            <person name="Weinstock K."/>
            <person name="Fechtel K."/>
            <person name="Weiss R.B."/>
            <person name="Dunn D.M."/>
            <person name="Green E.D."/>
            <person name="Blakesley R.W."/>
            <person name="Bouffard G.G."/>
            <person name="De Jong P.J."/>
            <person name="Osoegawa K."/>
            <person name="Zhu B."/>
            <person name="Marra M."/>
            <person name="Schein J."/>
            <person name="Bosdet I."/>
            <person name="Fjell C."/>
            <person name="Jones S."/>
            <person name="Krzywinski M."/>
            <person name="Mathewson C."/>
            <person name="Siddiqui A."/>
            <person name="Wye N."/>
            <person name="McPherson J."/>
            <person name="Zhao S."/>
            <person name="Fraser C.M."/>
            <person name="Shetty J."/>
            <person name="Shatsman S."/>
            <person name="Geer K."/>
            <person name="Chen Y."/>
            <person name="Abramzon S."/>
            <person name="Nierman W.C."/>
            <person name="Havlak P.H."/>
            <person name="Chen R."/>
            <person name="Durbin K.J."/>
            <person name="Egan A."/>
            <person name="Ren Y."/>
            <person name="Song X.-Z."/>
            <person name="Li B."/>
            <person name="Liu Y."/>
            <person name="Qin X."/>
            <person name="Cawley S."/>
            <person name="Cooney A.J."/>
            <person name="D'Souza L.M."/>
            <person name="Martin K."/>
            <person name="Wu J.Q."/>
            <person name="Gonzalez-Garay M.L."/>
            <person name="Jackson A.R."/>
            <person name="Kalafus K.J."/>
            <person name="McLeod M.P."/>
            <person name="Milosavljevic A."/>
            <person name="Virk D."/>
            <person name="Volkov A."/>
            <person name="Wheeler D.A."/>
            <person name="Zhang Z."/>
            <person name="Bailey J.A."/>
            <person name="Eichler E.E."/>
            <person name="Tuzun E."/>
            <person name="Birney E."/>
            <person name="Mongin E."/>
            <person name="Ureta-Vidal A."/>
            <person name="Woodwark C."/>
            <person name="Zdobnov E."/>
            <person name="Bork P."/>
            <person name="Suyama M."/>
            <person name="Torrents D."/>
            <person name="Alexandersson M."/>
            <person name="Trask B.J."/>
            <person name="Young J.M."/>
            <person name="Huang H."/>
            <person name="Wang H."/>
            <person name="Xing H."/>
            <person name="Daniels S."/>
            <person name="Gietzen D."/>
            <person name="Schmidt J."/>
            <person name="Stevens K."/>
            <person name="Vitt U."/>
            <person name="Wingrove J."/>
            <person name="Camara F."/>
            <person name="Mar Alba M."/>
            <person name="Abril J.F."/>
            <person name="Guigo R."/>
            <person name="Smit A."/>
            <person name="Dubchak I."/>
            <person name="Rubin E.M."/>
            <person name="Couronne O."/>
            <person name="Poliakov A."/>
            <person name="Huebner N."/>
            <person name="Ganten D."/>
            <person name="Goesele C."/>
            <person name="Hummel O."/>
            <person name="Kreitler T."/>
            <person name="Lee Y.-A."/>
            <person name="Monti J."/>
            <person name="Schulz H."/>
            <person name="Zimdahl H."/>
            <person name="Himmelbauer H."/>
            <person name="Lehrach H."/>
            <person name="Jacob H.J."/>
            <person name="Bromberg S."/>
            <person name="Gullings-Handley J."/>
            <person name="Jensen-Seaman M.I."/>
            <person name="Kwitek A.E."/>
            <person name="Lazar J."/>
            <person name="Pasko D."/>
            <person name="Tonellato P.J."/>
            <person name="Twigger S."/>
            <person name="Ponting C.P."/>
            <person name="Duarte J.M."/>
            <person name="Rice S."/>
            <person name="Goodstadt L."/>
            <person name="Beatson S.A."/>
            <person name="Emes R.D."/>
            <person name="Winter E.E."/>
            <person name="Webber C."/>
            <person name="Brandt P."/>
            <person name="Nyakatura G."/>
            <person name="Adetobi M."/>
            <person name="Chiaromonte F."/>
            <person name="Elnitski L."/>
            <person name="Eswara P."/>
            <person name="Hardison R.C."/>
            <person name="Hou M."/>
            <person name="Kolbe D."/>
            <person name="Makova K."/>
            <person name="Miller W."/>
            <person name="Nekrutenko A."/>
            <person name="Riemer C."/>
            <person name="Schwartz S."/>
            <person name="Taylor J."/>
            <person name="Yang S."/>
            <person name="Zhang Y."/>
            <person name="Lindpaintner K."/>
            <person name="Andrews T.D."/>
            <person name="Caccamo M."/>
            <person name="Clamp M."/>
            <person name="Clarke L."/>
            <person name="Curwen V."/>
            <person name="Durbin R.M."/>
            <person name="Eyras E."/>
            <person name="Searle S.M."/>
            <person name="Cooper G.M."/>
            <person name="Batzoglou S."/>
            <person name="Brudno M."/>
            <person name="Sidow A."/>
            <person name="Stone E.A."/>
            <person name="Payseur B.A."/>
            <person name="Bourque G."/>
            <person name="Lopez-Otin C."/>
            <person name="Puente X.S."/>
            <person name="Chakrabarti K."/>
            <person name="Chatterji S."/>
            <person name="Dewey C."/>
            <person name="Pachter L."/>
            <person name="Bray N."/>
            <person name="Yap V.B."/>
            <person name="Caspi A."/>
            <person name="Tesler G."/>
            <person name="Pevzner P.A."/>
            <person name="Haussler D."/>
            <person name="Roskin K.M."/>
            <person name="Baertsch R."/>
            <person name="Clawson H."/>
            <person name="Furey T.S."/>
            <person name="Hinrichs A.S."/>
            <person name="Karolchik D."/>
            <person name="Kent W.J."/>
            <person name="Rosenbloom K.R."/>
            <person name="Trumbower H."/>
            <person name="Weirauch M."/>
            <person name="Cooper D.N."/>
            <person name="Stenson P.D."/>
            <person name="Ma B."/>
            <person name="Brent M."/>
            <person name="Arumugam M."/>
            <person name="Shteynberg D."/>
            <person name="Copley R.R."/>
            <person name="Taylor M.S."/>
            <person name="Riethman H."/>
            <person name="Mudunuri U."/>
            <person name="Peterson J."/>
            <person name="Guyer M."/>
            <person name="Felsenfeld A."/>
            <person name="Old S."/>
            <person name="Mockrin S."/>
            <person name="Collins F.S."/>
        </authorList>
    </citation>
    <scope>NUCLEOTIDE SEQUENCE [LARGE SCALE GENOMIC DNA]</scope>
    <source>
        <strain>Brown Norway</strain>
    </source>
</reference>
<reference key="2">
    <citation type="journal article" date="2000" name="J. Biol. Chem.">
        <title>The glioma-associated protein SETA interacts with AIP1/Alix and ALG-2 and modulates apoptosis in astrocytes.</title>
        <authorList>
            <person name="Chen B."/>
            <person name="Borinstein S.C."/>
            <person name="Gillis J."/>
            <person name="Sykes V.W."/>
            <person name="Bogler O."/>
        </authorList>
    </citation>
    <scope>NUCLEOTIDE SEQUENCE [MRNA] OF 473-873</scope>
    <scope>INTERACTION WITH SH3KBP1</scope>
</reference>
<reference key="3">
    <citation type="journal article" date="2009" name="Proteomics">
        <title>Proteome profile of the mature rat olfactory bulb.</title>
        <authorList>
            <person name="Maurya D.K."/>
            <person name="Sundaram C.S."/>
            <person name="Bhargava P."/>
        </authorList>
    </citation>
    <scope>IDENTIFICATION BY MASS SPECTROMETRY</scope>
    <scope>SUBCELLULAR LOCATION</scope>
</reference>
<evidence type="ECO:0000250" key="1">
    <source>
        <dbReference type="UniProtKB" id="Q8WUM4"/>
    </source>
</evidence>
<evidence type="ECO:0000250" key="2">
    <source>
        <dbReference type="UniProtKB" id="Q9WU78"/>
    </source>
</evidence>
<evidence type="ECO:0000255" key="3">
    <source>
        <dbReference type="PROSITE-ProRule" id="PRU00526"/>
    </source>
</evidence>
<evidence type="ECO:0000256" key="4">
    <source>
        <dbReference type="SAM" id="MobiDB-lite"/>
    </source>
</evidence>
<evidence type="ECO:0000269" key="5">
    <source>
    </source>
</evidence>
<evidence type="ECO:0000269" key="6">
    <source>
    </source>
</evidence>
<evidence type="ECO:0000305" key="7"/>
<evidence type="ECO:0000312" key="8">
    <source>
        <dbReference type="RGD" id="68357"/>
    </source>
</evidence>
<comment type="function">
    <text evidence="1 2">Multifunctional protein involved in endocytosis, multivesicular body biogenesis, membrane repair, cytokinesis, apoptosis and maintenance of tight junction integrity. Class E VPS protein involved in concentration and sorting of cargo proteins of the multivesicular body (MVB) for incorporation into intralumenal vesicles (ILVs) that are generated by invagination and scission from the limiting membrane of the endosome. Binds to the phospholipid lysobisphosphatidic acid (LBPA) which is abundant in MVBs internal membranes. The MVB pathway requires the sequential function of ESCRT-O, -I,-II and -III complexes. The ESCRT machinery also functions in topologically equivalent membrane fission events, such as the terminal stages of cytokinesis. Adapter for a subset of ESCRT-III proteins, such as CHMP4, to function at distinct membranes. Required for completion of cytokinesis. May play a role in the regulation of both apoptosis and cell proliferation. Regulates exosome biogenesis in concert with SDC1/4 and SDCBP (By similarity). By interacting with F-actin, PARD3 and TJP1 secures the proper assembly and positioning of actomyosin-tight junction complex at the apical sides of adjacent epithelial cells that defines a spatial membrane domain essential for the maintenance of epithelial cell polarity and barrier (By similarity).</text>
</comment>
<comment type="subunit">
    <text evidence="1 2 5">Self-associates (By similarity). Interacts with SH3KBP1 (PubMed:10858458). Interacts with PDCD6 in a calcium-dependent manner (By similarity). Interacts with TSG101 in a calcium-dependent manner; PDCD6IP homooligomerization may be required for TSG101-binding (By similarity). Interacts with SGSM3 (By similarity). Directly interacts with CHMP4A, CHMP4B and CHMP4C (By similarity). Directly interacts with CEP55 in a 1:2 stoechiometry; this interaction is required for PDCD6IP targeting to the midbody (By similarity). May interact with PDGFRB (By similarity). Interacts with SH3GL1 and SH3GL2/endophilin-1 (By similarity). Forms a complex with SDCBP and SDC2 (By similarity). Found in a complex with F-actin, TJP1/ZO-1 and PARD3 (By similarity). Interacts with CD2AP (By similarity). Interacts with ARRDC1 (By similarity). Interacts (via BRO1 domain) with the ATG12-ATG3 conjugate; this interaction is bridged by ATG12 and promotes multiple PDCD6IP-mediated functions such as endolysosomal trafficking, macroautophagy and exosome biogenesis (By similarity).</text>
</comment>
<comment type="subcellular location">
    <subcellularLocation>
        <location evidence="6">Cytoplasm</location>
        <location evidence="6">Cytosol</location>
    </subcellularLocation>
    <subcellularLocation>
        <location evidence="1">Melanosome</location>
    </subcellularLocation>
    <subcellularLocation>
        <location evidence="1">Cytoplasm</location>
        <location evidence="1">Cytoskeleton</location>
        <location evidence="1">Microtubule organizing center</location>
        <location evidence="1">Centrosome</location>
    </subcellularLocation>
    <subcellularLocation>
        <location evidence="1">Secreted</location>
        <location evidence="1">Extracellular exosome</location>
    </subcellularLocation>
    <subcellularLocation>
        <location evidence="2">Cell junction</location>
        <location evidence="2">Tight junction</location>
    </subcellularLocation>
    <subcellularLocation>
        <location evidence="1">Midbody</location>
        <location evidence="1">Midbody ring</location>
    </subcellularLocation>
    <text evidence="1 2">Colocalized with CEP55 in the midbody during cytokinesis and at centrosomes in non-dividing cells (By similarity). Component of the actomyosin-tight junction complex (By similarity).</text>
</comment>
<comment type="tissue specificity">
    <text>Expressed in astrocytes and glioma cells.</text>
</comment>
<comment type="PTM">
    <text evidence="1">May be phosphorylated on tyrosine residues by activated PDGFRB.</text>
</comment>
<name>PDC6I_RAT</name>
<organism>
    <name type="scientific">Rattus norvegicus</name>
    <name type="common">Rat</name>
    <dbReference type="NCBI Taxonomy" id="10116"/>
    <lineage>
        <taxon>Eukaryota</taxon>
        <taxon>Metazoa</taxon>
        <taxon>Chordata</taxon>
        <taxon>Craniata</taxon>
        <taxon>Vertebrata</taxon>
        <taxon>Euteleostomi</taxon>
        <taxon>Mammalia</taxon>
        <taxon>Eutheria</taxon>
        <taxon>Euarchontoglires</taxon>
        <taxon>Glires</taxon>
        <taxon>Rodentia</taxon>
        <taxon>Myomorpha</taxon>
        <taxon>Muroidea</taxon>
        <taxon>Muridae</taxon>
        <taxon>Murinae</taxon>
        <taxon>Rattus</taxon>
    </lineage>
</organism>
<keyword id="KW-0007">Acetylation</keyword>
<keyword id="KW-0053">Apoptosis</keyword>
<keyword id="KW-0131">Cell cycle</keyword>
<keyword id="KW-0132">Cell division</keyword>
<keyword id="KW-0965">Cell junction</keyword>
<keyword id="KW-0963">Cytoplasm</keyword>
<keyword id="KW-0206">Cytoskeleton</keyword>
<keyword id="KW-0488">Methylation</keyword>
<keyword id="KW-0597">Phosphoprotein</keyword>
<keyword id="KW-0653">Protein transport</keyword>
<keyword id="KW-1185">Reference proteome</keyword>
<keyword id="KW-0964">Secreted</keyword>
<keyword id="KW-0796">Tight junction</keyword>
<keyword id="KW-0813">Transport</keyword>
<feature type="initiator methionine" description="Removed" evidence="1">
    <location>
        <position position="1"/>
    </location>
</feature>
<feature type="chain" id="PRO_0000349296" description="Programmed cell death 6-interacting protein">
    <location>
        <begin position="2"/>
        <end position="873"/>
    </location>
</feature>
<feature type="domain" description="BRO1" evidence="3">
    <location>
        <begin position="3"/>
        <end position="397"/>
    </location>
</feature>
<feature type="region of interest" description="Interaction with CHMP4A, CHMP4B and CHMP4C" evidence="1">
    <location>
        <begin position="176"/>
        <end position="508"/>
    </location>
</feature>
<feature type="region of interest" description="Interaction with SDCBP" evidence="1">
    <location>
        <begin position="423"/>
        <end position="873"/>
    </location>
</feature>
<feature type="region of interest" description="Self-association" evidence="1">
    <location>
        <begin position="508"/>
        <end position="873"/>
    </location>
</feature>
<feature type="region of interest" description="Disordered" evidence="4">
    <location>
        <begin position="719"/>
        <end position="808"/>
    </location>
</feature>
<feature type="region of interest" description="Interaction with TSG101" evidence="1">
    <location>
        <begin position="722"/>
        <end position="725"/>
    </location>
</feature>
<feature type="region of interest" description="Interaction with CEP55" evidence="1">
    <location>
        <begin position="802"/>
        <end position="811"/>
    </location>
</feature>
<feature type="region of interest" description="Disordered" evidence="4">
    <location>
        <begin position="837"/>
        <end position="873"/>
    </location>
</feature>
<feature type="compositionally biased region" description="Pro residues" evidence="4">
    <location>
        <begin position="745"/>
        <end position="767"/>
    </location>
</feature>
<feature type="compositionally biased region" description="Low complexity" evidence="4">
    <location>
        <begin position="768"/>
        <end position="791"/>
    </location>
</feature>
<feature type="compositionally biased region" description="Pro residues" evidence="4">
    <location>
        <begin position="792"/>
        <end position="808"/>
    </location>
</feature>
<feature type="compositionally biased region" description="Pro residues" evidence="4">
    <location>
        <begin position="849"/>
        <end position="865"/>
    </location>
</feature>
<feature type="modified residue" description="N-acetylalanine" evidence="1">
    <location>
        <position position="2"/>
    </location>
</feature>
<feature type="modified residue" description="N6-acetyllysine" evidence="1">
    <location>
        <position position="215"/>
    </location>
</feature>
<feature type="modified residue" description="Phosphothreonine" evidence="1">
    <location>
        <position position="484"/>
    </location>
</feature>
<feature type="modified residue" description="Phosphoserine" evidence="1">
    <location>
        <position position="486"/>
    </location>
</feature>
<feature type="modified residue" description="Phosphoserine" evidence="1">
    <location>
        <position position="735"/>
    </location>
</feature>
<feature type="modified residue" description="Phosphothreonine" evidence="1">
    <location>
        <position position="742"/>
    </location>
</feature>
<feature type="modified residue" description="Phosphothreonine" evidence="1">
    <location>
        <position position="745"/>
    </location>
</feature>
<feature type="modified residue" description="Omega-N-methylarginine" evidence="1">
    <location>
        <position position="749"/>
    </location>
</feature>